<protein>
    <recommendedName>
        <fullName evidence="1">Iron-sulfur cluster insertion protein ErpA</fullName>
    </recommendedName>
</protein>
<feature type="chain" id="PRO_0000076995" description="Iron-sulfur cluster insertion protein ErpA">
    <location>
        <begin position="1"/>
        <end position="114"/>
    </location>
</feature>
<feature type="binding site" evidence="1">
    <location>
        <position position="42"/>
    </location>
    <ligand>
        <name>iron-sulfur cluster</name>
        <dbReference type="ChEBI" id="CHEBI:30408"/>
    </ligand>
</feature>
<feature type="binding site" evidence="1">
    <location>
        <position position="106"/>
    </location>
    <ligand>
        <name>iron-sulfur cluster</name>
        <dbReference type="ChEBI" id="CHEBI:30408"/>
    </ligand>
</feature>
<feature type="binding site" evidence="1">
    <location>
        <position position="108"/>
    </location>
    <ligand>
        <name>iron-sulfur cluster</name>
        <dbReference type="ChEBI" id="CHEBI:30408"/>
    </ligand>
</feature>
<comment type="function">
    <text evidence="1">Required for insertion of 4Fe-4S clusters for at least IspG.</text>
</comment>
<comment type="cofactor">
    <cofactor evidence="1">
        <name>iron-sulfur cluster</name>
        <dbReference type="ChEBI" id="CHEBI:30408"/>
    </cofactor>
    <text evidence="1">Binds 1 iron-sulfur cluster per subunit.</text>
</comment>
<comment type="subunit">
    <text evidence="1">Homodimer.</text>
</comment>
<comment type="similarity">
    <text evidence="1">Belongs to the HesB/IscA family.</text>
</comment>
<reference key="1">
    <citation type="journal article" date="1999" name="J. Biol. Chem.">
        <title>Haemophilus ducreyi produces a novel sialyltransferase. Identification of the sialyltransferase gene and construction of mutants deficient in the production of the sialic acid-containing glycoform of the lipooligosaccharide.</title>
        <authorList>
            <person name="Bozue J.A."/>
            <person name="Tullius M.V."/>
            <person name="Wang J."/>
            <person name="Gibson B.W."/>
            <person name="Munson R.S. Jr."/>
        </authorList>
    </citation>
    <scope>NUCLEOTIDE SEQUENCE [GENOMIC DNA]</scope>
    <source>
        <strain>35000HP / ATCC 700724</strain>
    </source>
</reference>
<reference key="2">
    <citation type="submission" date="2003-06" db="EMBL/GenBank/DDBJ databases">
        <title>The complete genome sequence of Haemophilus ducreyi.</title>
        <authorList>
            <person name="Munson R.S. Jr."/>
            <person name="Ray W.C."/>
            <person name="Mahairas G."/>
            <person name="Sabo P."/>
            <person name="Mungur R."/>
            <person name="Johnson L."/>
            <person name="Nguyen D."/>
            <person name="Wang J."/>
            <person name="Forst C."/>
            <person name="Hood L."/>
        </authorList>
    </citation>
    <scope>NUCLEOTIDE SEQUENCE [LARGE SCALE GENOMIC DNA]</scope>
    <source>
        <strain>35000HP / ATCC 700724</strain>
    </source>
</reference>
<proteinExistence type="inferred from homology"/>
<organism>
    <name type="scientific">Haemophilus ducreyi (strain 35000HP / ATCC 700724)</name>
    <dbReference type="NCBI Taxonomy" id="233412"/>
    <lineage>
        <taxon>Bacteria</taxon>
        <taxon>Pseudomonadati</taxon>
        <taxon>Pseudomonadota</taxon>
        <taxon>Gammaproteobacteria</taxon>
        <taxon>Pasteurellales</taxon>
        <taxon>Pasteurellaceae</taxon>
        <taxon>Haemophilus</taxon>
    </lineage>
</organism>
<evidence type="ECO:0000255" key="1">
    <source>
        <dbReference type="HAMAP-Rule" id="MF_01380"/>
    </source>
</evidence>
<name>ERPA_HAEDU</name>
<accession>Q9X4A0</accession>
<keyword id="KW-0408">Iron</keyword>
<keyword id="KW-0411">Iron-sulfur</keyword>
<keyword id="KW-0479">Metal-binding</keyword>
<keyword id="KW-1185">Reference proteome</keyword>
<gene>
    <name evidence="1" type="primary">erpA</name>
    <name type="ordered locus">HD_0684</name>
</gene>
<dbReference type="EMBL" id="AF101047">
    <property type="protein sequence ID" value="AAD28701.1"/>
    <property type="molecule type" value="Genomic_DNA"/>
</dbReference>
<dbReference type="EMBL" id="AE017143">
    <property type="protein sequence ID" value="AAP95603.1"/>
    <property type="molecule type" value="Genomic_DNA"/>
</dbReference>
<dbReference type="RefSeq" id="WP_010944655.1">
    <property type="nucleotide sequence ID" value="NC_002940.2"/>
</dbReference>
<dbReference type="SMR" id="Q9X4A0"/>
<dbReference type="STRING" id="233412.HD_0684"/>
<dbReference type="GeneID" id="60733202"/>
<dbReference type="KEGG" id="hdu:HD_0684"/>
<dbReference type="eggNOG" id="COG0316">
    <property type="taxonomic scope" value="Bacteria"/>
</dbReference>
<dbReference type="HOGENOM" id="CLU_069054_5_3_6"/>
<dbReference type="OrthoDB" id="9801228at2"/>
<dbReference type="Proteomes" id="UP000001022">
    <property type="component" value="Chromosome"/>
</dbReference>
<dbReference type="GO" id="GO:0005829">
    <property type="term" value="C:cytosol"/>
    <property type="evidence" value="ECO:0007669"/>
    <property type="project" value="TreeGrafter"/>
</dbReference>
<dbReference type="GO" id="GO:0051537">
    <property type="term" value="F:2 iron, 2 sulfur cluster binding"/>
    <property type="evidence" value="ECO:0007669"/>
    <property type="project" value="UniProtKB-ARBA"/>
</dbReference>
<dbReference type="GO" id="GO:0051539">
    <property type="term" value="F:4 iron, 4 sulfur cluster binding"/>
    <property type="evidence" value="ECO:0007669"/>
    <property type="project" value="TreeGrafter"/>
</dbReference>
<dbReference type="GO" id="GO:0005506">
    <property type="term" value="F:iron ion binding"/>
    <property type="evidence" value="ECO:0007669"/>
    <property type="project" value="UniProtKB-UniRule"/>
</dbReference>
<dbReference type="GO" id="GO:0016226">
    <property type="term" value="P:iron-sulfur cluster assembly"/>
    <property type="evidence" value="ECO:0007669"/>
    <property type="project" value="UniProtKB-UniRule"/>
</dbReference>
<dbReference type="FunFam" id="2.60.300.12:FF:000002">
    <property type="entry name" value="Iron-sulfur cluster insertion protein ErpA"/>
    <property type="match status" value="1"/>
</dbReference>
<dbReference type="Gene3D" id="2.60.300.12">
    <property type="entry name" value="HesB-like domain"/>
    <property type="match status" value="1"/>
</dbReference>
<dbReference type="HAMAP" id="MF_01380">
    <property type="entry name" value="Fe_S_insert_ErpA"/>
    <property type="match status" value="1"/>
</dbReference>
<dbReference type="InterPro" id="IPR000361">
    <property type="entry name" value="FeS_biogenesis"/>
</dbReference>
<dbReference type="InterPro" id="IPR016092">
    <property type="entry name" value="FeS_cluster_insertion"/>
</dbReference>
<dbReference type="InterPro" id="IPR017870">
    <property type="entry name" value="FeS_cluster_insertion_CS"/>
</dbReference>
<dbReference type="InterPro" id="IPR023063">
    <property type="entry name" value="FeS_cluster_insertion_RrpA"/>
</dbReference>
<dbReference type="InterPro" id="IPR035903">
    <property type="entry name" value="HesB-like_dom_sf"/>
</dbReference>
<dbReference type="NCBIfam" id="TIGR00049">
    <property type="entry name" value="iron-sulfur cluster assembly accessory protein"/>
    <property type="match status" value="1"/>
</dbReference>
<dbReference type="NCBIfam" id="NF010147">
    <property type="entry name" value="PRK13623.1"/>
    <property type="match status" value="1"/>
</dbReference>
<dbReference type="PANTHER" id="PTHR43011">
    <property type="entry name" value="IRON-SULFUR CLUSTER ASSEMBLY 2 HOMOLOG, MITOCHONDRIAL"/>
    <property type="match status" value="1"/>
</dbReference>
<dbReference type="PANTHER" id="PTHR43011:SF1">
    <property type="entry name" value="IRON-SULFUR CLUSTER ASSEMBLY 2 HOMOLOG, MITOCHONDRIAL"/>
    <property type="match status" value="1"/>
</dbReference>
<dbReference type="Pfam" id="PF01521">
    <property type="entry name" value="Fe-S_biosyn"/>
    <property type="match status" value="1"/>
</dbReference>
<dbReference type="SUPFAM" id="SSF89360">
    <property type="entry name" value="HesB-like domain"/>
    <property type="match status" value="1"/>
</dbReference>
<dbReference type="PROSITE" id="PS01152">
    <property type="entry name" value="HESB"/>
    <property type="match status" value="1"/>
</dbReference>
<sequence length="114" mass="12211">MSDIDQIPLTFTDAAAKKVKSLIEGEDNPNLRLRVYITGGGCSGFQYGFTFDDKINEGDLTIENQNVGLIVDPMSLQYLIGGSVDYTEGLDGSRFVVQNPNASSTCGCGSSFSI</sequence>